<feature type="chain" id="PRO_0000213343" description="Pyridoxine/pyridoxal/pyridoxamine kinase">
    <location>
        <begin position="1"/>
        <end position="288"/>
    </location>
</feature>
<feature type="binding site" evidence="1">
    <location>
        <position position="28"/>
    </location>
    <ligand>
        <name>substrate</name>
    </ligand>
</feature>
<feature type="binding site" evidence="1">
    <location>
        <position position="64"/>
    </location>
    <ligand>
        <name>substrate</name>
    </ligand>
</feature>
<feature type="binding site" evidence="1">
    <location>
        <position position="130"/>
    </location>
    <ligand>
        <name>ATP</name>
        <dbReference type="ChEBI" id="CHEBI:30616"/>
    </ligand>
</feature>
<feature type="binding site" evidence="1">
    <location>
        <position position="141"/>
    </location>
    <ligand>
        <name>Mg(2+)</name>
        <dbReference type="ChEBI" id="CHEBI:18420"/>
    </ligand>
</feature>
<feature type="binding site" evidence="1">
    <location>
        <position position="162"/>
    </location>
    <ligand>
        <name>ATP</name>
        <dbReference type="ChEBI" id="CHEBI:30616"/>
    </ligand>
</feature>
<feature type="binding site" evidence="1">
    <location>
        <position position="167"/>
    </location>
    <ligand>
        <name>ATP</name>
        <dbReference type="ChEBI" id="CHEBI:30616"/>
    </ligand>
</feature>
<feature type="binding site" evidence="1">
    <location>
        <position position="167"/>
    </location>
    <ligand>
        <name>Mg(2+)</name>
        <dbReference type="ChEBI" id="CHEBI:18420"/>
    </ligand>
</feature>
<feature type="binding site" evidence="1">
    <location>
        <position position="200"/>
    </location>
    <ligand>
        <name>ATP</name>
        <dbReference type="ChEBI" id="CHEBI:30616"/>
    </ligand>
</feature>
<feature type="binding site" evidence="1">
    <location>
        <begin position="225"/>
        <end position="228"/>
    </location>
    <ligand>
        <name>ATP</name>
        <dbReference type="ChEBI" id="CHEBI:30616"/>
    </ligand>
</feature>
<feature type="binding site" evidence="1">
    <location>
        <position position="235"/>
    </location>
    <ligand>
        <name>ATP</name>
        <dbReference type="ChEBI" id="CHEBI:30616"/>
    </ligand>
</feature>
<feature type="binding site" evidence="1">
    <location>
        <position position="237"/>
    </location>
    <ligand>
        <name>substrate</name>
    </ligand>
</feature>
<feature type="sequence conflict" description="In Ref. 2; AAO68140." evidence="2" ref="2">
    <original>N</original>
    <variation>Y</variation>
    <location>
        <position position="101"/>
    </location>
</feature>
<name>PDXK_SALTI</name>
<comment type="function">
    <text evidence="1">B6-vitamer kinase involved in the salvage pathway of pyridoxal 5'-phosphate (PLP). Catalyzes the phosphorylation of pyridoxine (PN), pyridoxal (PL), and pyridoxamine (PM), forming their respective 5'-phosphorylated esters, i.e. PNP, PLP and PMP.</text>
</comment>
<comment type="catalytic activity">
    <reaction evidence="1">
        <text>pyridoxal + ATP = pyridoxal 5'-phosphate + ADP + H(+)</text>
        <dbReference type="Rhea" id="RHEA:10224"/>
        <dbReference type="ChEBI" id="CHEBI:15378"/>
        <dbReference type="ChEBI" id="CHEBI:17310"/>
        <dbReference type="ChEBI" id="CHEBI:30616"/>
        <dbReference type="ChEBI" id="CHEBI:456216"/>
        <dbReference type="ChEBI" id="CHEBI:597326"/>
        <dbReference type="EC" id="2.7.1.35"/>
    </reaction>
</comment>
<comment type="catalytic activity">
    <reaction evidence="1">
        <text>pyridoxine + ATP = pyridoxine 5'-phosphate + ADP + H(+)</text>
        <dbReference type="Rhea" id="RHEA:25108"/>
        <dbReference type="ChEBI" id="CHEBI:15378"/>
        <dbReference type="ChEBI" id="CHEBI:16709"/>
        <dbReference type="ChEBI" id="CHEBI:30616"/>
        <dbReference type="ChEBI" id="CHEBI:58589"/>
        <dbReference type="ChEBI" id="CHEBI:456216"/>
        <dbReference type="EC" id="2.7.1.35"/>
    </reaction>
</comment>
<comment type="catalytic activity">
    <reaction evidence="1">
        <text>pyridoxamine + ATP = pyridoxamine 5'-phosphate + ADP + H(+)</text>
        <dbReference type="Rhea" id="RHEA:25104"/>
        <dbReference type="ChEBI" id="CHEBI:15378"/>
        <dbReference type="ChEBI" id="CHEBI:30616"/>
        <dbReference type="ChEBI" id="CHEBI:57761"/>
        <dbReference type="ChEBI" id="CHEBI:58451"/>
        <dbReference type="ChEBI" id="CHEBI:456216"/>
        <dbReference type="EC" id="2.7.1.35"/>
    </reaction>
</comment>
<comment type="cofactor">
    <cofactor evidence="1">
        <name>Mg(2+)</name>
        <dbReference type="ChEBI" id="CHEBI:18420"/>
    </cofactor>
</comment>
<comment type="pathway">
    <text evidence="1">Cofactor metabolism; pyridoxal 5'-phosphate salvage; pyridoxal 5'-phosphate from pyridoxal: step 1/1.</text>
</comment>
<comment type="pathway">
    <text evidence="1">Cofactor metabolism; pyridoxal 5'-phosphate salvage; pyridoxine 5'-phosphate from pyridoxine: step 1/1.</text>
</comment>
<comment type="pathway">
    <text evidence="1">Cofactor metabolism; pyridoxal 5'-phosphate salvage; pyridoxamine 5'-phosphate from pyridoxamine: step 1/1.</text>
</comment>
<comment type="subunit">
    <text evidence="1">Homodimer.</text>
</comment>
<comment type="similarity">
    <text evidence="1">Belongs to the pyridoxine kinase family. PdxK subfamily.</text>
</comment>
<accession>Q8Z4W1</accession>
<dbReference type="EC" id="2.7.1.35" evidence="1"/>
<dbReference type="EMBL" id="AL513382">
    <property type="protein sequence ID" value="CAD07667.1"/>
    <property type="molecule type" value="Genomic_DNA"/>
</dbReference>
<dbReference type="EMBL" id="AE014613">
    <property type="protein sequence ID" value="AAO68140.1"/>
    <property type="molecule type" value="Genomic_DNA"/>
</dbReference>
<dbReference type="RefSeq" id="NP_456971.1">
    <property type="nucleotide sequence ID" value="NC_003198.1"/>
</dbReference>
<dbReference type="SMR" id="Q8Z4W1"/>
<dbReference type="STRING" id="220341.gene:17586571"/>
<dbReference type="KEGG" id="stt:t0423"/>
<dbReference type="KEGG" id="sty:STY2672"/>
<dbReference type="PATRIC" id="fig|220341.7.peg.2709"/>
<dbReference type="eggNOG" id="COG2240">
    <property type="taxonomic scope" value="Bacteria"/>
</dbReference>
<dbReference type="HOGENOM" id="CLU_046496_3_1_6"/>
<dbReference type="OMA" id="AWTHQHP"/>
<dbReference type="UniPathway" id="UPA01068">
    <property type="reaction ID" value="UER00298"/>
</dbReference>
<dbReference type="UniPathway" id="UPA01068">
    <property type="reaction ID" value="UER00299"/>
</dbReference>
<dbReference type="UniPathway" id="UPA01068">
    <property type="reaction ID" value="UER00300"/>
</dbReference>
<dbReference type="Proteomes" id="UP000000541">
    <property type="component" value="Chromosome"/>
</dbReference>
<dbReference type="Proteomes" id="UP000002670">
    <property type="component" value="Chromosome"/>
</dbReference>
<dbReference type="GO" id="GO:0005829">
    <property type="term" value="C:cytosol"/>
    <property type="evidence" value="ECO:0007669"/>
    <property type="project" value="TreeGrafter"/>
</dbReference>
<dbReference type="GO" id="GO:0005524">
    <property type="term" value="F:ATP binding"/>
    <property type="evidence" value="ECO:0007669"/>
    <property type="project" value="UniProtKB-UniRule"/>
</dbReference>
<dbReference type="GO" id="GO:0008902">
    <property type="term" value="F:hydroxymethylpyrimidine kinase activity"/>
    <property type="evidence" value="ECO:0007669"/>
    <property type="project" value="TreeGrafter"/>
</dbReference>
<dbReference type="GO" id="GO:0000287">
    <property type="term" value="F:magnesium ion binding"/>
    <property type="evidence" value="ECO:0007669"/>
    <property type="project" value="UniProtKB-UniRule"/>
</dbReference>
<dbReference type="GO" id="GO:0008478">
    <property type="term" value="F:pyridoxal kinase activity"/>
    <property type="evidence" value="ECO:0007669"/>
    <property type="project" value="UniProtKB-UniRule"/>
</dbReference>
<dbReference type="GO" id="GO:0008270">
    <property type="term" value="F:zinc ion binding"/>
    <property type="evidence" value="ECO:0007669"/>
    <property type="project" value="UniProtKB-UniRule"/>
</dbReference>
<dbReference type="GO" id="GO:0009443">
    <property type="term" value="P:pyridoxal 5'-phosphate salvage"/>
    <property type="evidence" value="ECO:0007669"/>
    <property type="project" value="UniProtKB-UniRule"/>
</dbReference>
<dbReference type="CDD" id="cd01173">
    <property type="entry name" value="pyridoxal_pyridoxamine_kinase"/>
    <property type="match status" value="1"/>
</dbReference>
<dbReference type="FunFam" id="3.40.1190.20:FF:000009">
    <property type="entry name" value="Pyridoxine/pyridoxal/pyridoxamine kinase"/>
    <property type="match status" value="1"/>
</dbReference>
<dbReference type="Gene3D" id="3.40.1190.20">
    <property type="match status" value="1"/>
</dbReference>
<dbReference type="HAMAP" id="MF_01638">
    <property type="entry name" value="PdxK"/>
    <property type="match status" value="1"/>
</dbReference>
<dbReference type="InterPro" id="IPR023479">
    <property type="entry name" value="PdxK"/>
</dbReference>
<dbReference type="InterPro" id="IPR013749">
    <property type="entry name" value="PM/HMP-P_kinase-1"/>
</dbReference>
<dbReference type="InterPro" id="IPR004625">
    <property type="entry name" value="PyrdxlKinase"/>
</dbReference>
<dbReference type="InterPro" id="IPR029056">
    <property type="entry name" value="Ribokinase-like"/>
</dbReference>
<dbReference type="NCBIfam" id="NF006034">
    <property type="entry name" value="PRK08176.1"/>
    <property type="match status" value="1"/>
</dbReference>
<dbReference type="NCBIfam" id="TIGR00687">
    <property type="entry name" value="pyridox_kin"/>
    <property type="match status" value="1"/>
</dbReference>
<dbReference type="PANTHER" id="PTHR10534">
    <property type="entry name" value="PYRIDOXAL KINASE"/>
    <property type="match status" value="1"/>
</dbReference>
<dbReference type="PANTHER" id="PTHR10534:SF15">
    <property type="entry name" value="PYRIDOXINE_PYRIDOXAL_PYRIDOXAMINE KINASE"/>
    <property type="match status" value="1"/>
</dbReference>
<dbReference type="Pfam" id="PF08543">
    <property type="entry name" value="Phos_pyr_kin"/>
    <property type="match status" value="1"/>
</dbReference>
<dbReference type="SUPFAM" id="SSF53613">
    <property type="entry name" value="Ribokinase-like"/>
    <property type="match status" value="1"/>
</dbReference>
<keyword id="KW-0067">ATP-binding</keyword>
<keyword id="KW-0418">Kinase</keyword>
<keyword id="KW-0460">Magnesium</keyword>
<keyword id="KW-0479">Metal-binding</keyword>
<keyword id="KW-0547">Nucleotide-binding</keyword>
<keyword id="KW-0808">Transferase</keyword>
<keyword id="KW-0862">Zinc</keyword>
<reference key="1">
    <citation type="journal article" date="2001" name="Nature">
        <title>Complete genome sequence of a multiple drug resistant Salmonella enterica serovar Typhi CT18.</title>
        <authorList>
            <person name="Parkhill J."/>
            <person name="Dougan G."/>
            <person name="James K.D."/>
            <person name="Thomson N.R."/>
            <person name="Pickard D."/>
            <person name="Wain J."/>
            <person name="Churcher C.M."/>
            <person name="Mungall K.L."/>
            <person name="Bentley S.D."/>
            <person name="Holden M.T.G."/>
            <person name="Sebaihia M."/>
            <person name="Baker S."/>
            <person name="Basham D."/>
            <person name="Brooks K."/>
            <person name="Chillingworth T."/>
            <person name="Connerton P."/>
            <person name="Cronin A."/>
            <person name="Davis P."/>
            <person name="Davies R.M."/>
            <person name="Dowd L."/>
            <person name="White N."/>
            <person name="Farrar J."/>
            <person name="Feltwell T."/>
            <person name="Hamlin N."/>
            <person name="Haque A."/>
            <person name="Hien T.T."/>
            <person name="Holroyd S."/>
            <person name="Jagels K."/>
            <person name="Krogh A."/>
            <person name="Larsen T.S."/>
            <person name="Leather S."/>
            <person name="Moule S."/>
            <person name="O'Gaora P."/>
            <person name="Parry C."/>
            <person name="Quail M.A."/>
            <person name="Rutherford K.M."/>
            <person name="Simmonds M."/>
            <person name="Skelton J."/>
            <person name="Stevens K."/>
            <person name="Whitehead S."/>
            <person name="Barrell B.G."/>
        </authorList>
    </citation>
    <scope>NUCLEOTIDE SEQUENCE [LARGE SCALE GENOMIC DNA]</scope>
    <source>
        <strain>CT18</strain>
    </source>
</reference>
<reference key="2">
    <citation type="journal article" date="2003" name="J. Bacteriol.">
        <title>Comparative genomics of Salmonella enterica serovar Typhi strains Ty2 and CT18.</title>
        <authorList>
            <person name="Deng W."/>
            <person name="Liou S.-R."/>
            <person name="Plunkett G. III"/>
            <person name="Mayhew G.F."/>
            <person name="Rose D.J."/>
            <person name="Burland V."/>
            <person name="Kodoyianni V."/>
            <person name="Schwartz D.C."/>
            <person name="Blattner F.R."/>
        </authorList>
    </citation>
    <scope>NUCLEOTIDE SEQUENCE [LARGE SCALE GENOMIC DNA]</scope>
    <source>
        <strain>ATCC 700931 / Ty2</strain>
    </source>
</reference>
<gene>
    <name evidence="1" type="primary">pdxK</name>
    <name type="ordered locus">STY2672</name>
    <name type="ordered locus">t0423</name>
</gene>
<proteinExistence type="inferred from homology"/>
<sequence>MGQESDIQSVLFDDNHRALQTDIVAVQSQVVYGSVGNSIAVPAIKAQGLRVTAVPTVLFSNTPHYKTFYGGIIPAEWFAGYLTALNERDALRELKAITTGNMGSADQIVLLSKWLMAIRASHPEVCILVDPVIGDTDSGMYVQAEIPQAYRTHLLPQAQGLTPNVFELEMLSGKPCRTLEEAVAAAQSLLSDTLKWVVITSAPGESLETITVAVVTAQVVEVFAHPRVATELKGTGDLFCAELVSGIVQGKKLTTAAKDAAQRVLEVMTWTQQCGCDELILPPAGEAR</sequence>
<evidence type="ECO:0000255" key="1">
    <source>
        <dbReference type="HAMAP-Rule" id="MF_01638"/>
    </source>
</evidence>
<evidence type="ECO:0000305" key="2"/>
<protein>
    <recommendedName>
        <fullName evidence="1">Pyridoxine/pyridoxal/pyridoxamine kinase</fullName>
        <shortName evidence="1">PN/PL/PM kinase</shortName>
        <ecNumber evidence="1">2.7.1.35</ecNumber>
    </recommendedName>
    <alternativeName>
        <fullName evidence="1">B6-vitamer kinase</fullName>
    </alternativeName>
</protein>
<organism>
    <name type="scientific">Salmonella typhi</name>
    <dbReference type="NCBI Taxonomy" id="90370"/>
    <lineage>
        <taxon>Bacteria</taxon>
        <taxon>Pseudomonadati</taxon>
        <taxon>Pseudomonadota</taxon>
        <taxon>Gammaproteobacteria</taxon>
        <taxon>Enterobacterales</taxon>
        <taxon>Enterobacteriaceae</taxon>
        <taxon>Salmonella</taxon>
    </lineage>
</organism>